<proteinExistence type="inferred from homology"/>
<gene>
    <name evidence="1" type="primary">argG</name>
    <name type="ordered locus">BceJ2315_42060</name>
    <name type="ORF">BCAM0746</name>
</gene>
<feature type="chain" id="PRO_1000129740" description="Argininosuccinate synthase">
    <location>
        <begin position="1"/>
        <end position="445"/>
    </location>
</feature>
<feature type="binding site" evidence="1">
    <location>
        <begin position="17"/>
        <end position="25"/>
    </location>
    <ligand>
        <name>ATP</name>
        <dbReference type="ChEBI" id="CHEBI:30616"/>
    </ligand>
</feature>
<feature type="binding site" evidence="1">
    <location>
        <position position="43"/>
    </location>
    <ligand>
        <name>ATP</name>
        <dbReference type="ChEBI" id="CHEBI:30616"/>
    </ligand>
</feature>
<feature type="binding site" evidence="1">
    <location>
        <position position="99"/>
    </location>
    <ligand>
        <name>L-citrulline</name>
        <dbReference type="ChEBI" id="CHEBI:57743"/>
    </ligand>
</feature>
<feature type="binding site" evidence="1">
    <location>
        <position position="129"/>
    </location>
    <ligand>
        <name>ATP</name>
        <dbReference type="ChEBI" id="CHEBI:30616"/>
    </ligand>
</feature>
<feature type="binding site" evidence="1">
    <location>
        <position position="131"/>
    </location>
    <ligand>
        <name>ATP</name>
        <dbReference type="ChEBI" id="CHEBI:30616"/>
    </ligand>
</feature>
<feature type="binding site" evidence="1">
    <location>
        <position position="131"/>
    </location>
    <ligand>
        <name>L-aspartate</name>
        <dbReference type="ChEBI" id="CHEBI:29991"/>
    </ligand>
</feature>
<feature type="binding site" evidence="1">
    <location>
        <position position="135"/>
    </location>
    <ligand>
        <name>L-aspartate</name>
        <dbReference type="ChEBI" id="CHEBI:29991"/>
    </ligand>
</feature>
<feature type="binding site" evidence="1">
    <location>
        <position position="135"/>
    </location>
    <ligand>
        <name>L-citrulline</name>
        <dbReference type="ChEBI" id="CHEBI:57743"/>
    </ligand>
</feature>
<feature type="binding site" evidence="1">
    <location>
        <position position="136"/>
    </location>
    <ligand>
        <name>ATP</name>
        <dbReference type="ChEBI" id="CHEBI:30616"/>
    </ligand>
</feature>
<feature type="binding site" evidence="1">
    <location>
        <position position="136"/>
    </location>
    <ligand>
        <name>L-aspartate</name>
        <dbReference type="ChEBI" id="CHEBI:29991"/>
    </ligand>
</feature>
<feature type="binding site" evidence="1">
    <location>
        <position position="139"/>
    </location>
    <ligand>
        <name>L-citrulline</name>
        <dbReference type="ChEBI" id="CHEBI:57743"/>
    </ligand>
</feature>
<feature type="binding site" evidence="1">
    <location>
        <position position="192"/>
    </location>
    <ligand>
        <name>L-citrulline</name>
        <dbReference type="ChEBI" id="CHEBI:57743"/>
    </ligand>
</feature>
<feature type="binding site" evidence="1">
    <location>
        <position position="194"/>
    </location>
    <ligand>
        <name>ATP</name>
        <dbReference type="ChEBI" id="CHEBI:30616"/>
    </ligand>
</feature>
<feature type="binding site" evidence="1">
    <location>
        <position position="201"/>
    </location>
    <ligand>
        <name>L-citrulline</name>
        <dbReference type="ChEBI" id="CHEBI:57743"/>
    </ligand>
</feature>
<feature type="binding site" evidence="1">
    <location>
        <position position="203"/>
    </location>
    <ligand>
        <name>L-citrulline</name>
        <dbReference type="ChEBI" id="CHEBI:57743"/>
    </ligand>
</feature>
<feature type="binding site" evidence="1">
    <location>
        <position position="280"/>
    </location>
    <ligand>
        <name>L-citrulline</name>
        <dbReference type="ChEBI" id="CHEBI:57743"/>
    </ligand>
</feature>
<evidence type="ECO:0000255" key="1">
    <source>
        <dbReference type="HAMAP-Rule" id="MF_00581"/>
    </source>
</evidence>
<organism>
    <name type="scientific">Burkholderia cenocepacia (strain ATCC BAA-245 / DSM 16553 / LMG 16656 / NCTC 13227 / J2315 / CF5610)</name>
    <name type="common">Burkholderia cepacia (strain J2315)</name>
    <dbReference type="NCBI Taxonomy" id="216591"/>
    <lineage>
        <taxon>Bacteria</taxon>
        <taxon>Pseudomonadati</taxon>
        <taxon>Pseudomonadota</taxon>
        <taxon>Betaproteobacteria</taxon>
        <taxon>Burkholderiales</taxon>
        <taxon>Burkholderiaceae</taxon>
        <taxon>Burkholderia</taxon>
        <taxon>Burkholderia cepacia complex</taxon>
    </lineage>
</organism>
<dbReference type="EC" id="6.3.4.5" evidence="1"/>
<dbReference type="EMBL" id="AM747721">
    <property type="protein sequence ID" value="CAR54606.1"/>
    <property type="molecule type" value="Genomic_DNA"/>
</dbReference>
<dbReference type="RefSeq" id="WP_006487483.1">
    <property type="nucleotide sequence ID" value="NC_011001.1"/>
</dbReference>
<dbReference type="SMR" id="B4EM48"/>
<dbReference type="KEGG" id="bcj:BCAM0746"/>
<dbReference type="eggNOG" id="COG0137">
    <property type="taxonomic scope" value="Bacteria"/>
</dbReference>
<dbReference type="HOGENOM" id="CLU_032784_4_1_4"/>
<dbReference type="BioCyc" id="BCEN216591:G1G1V-4724-MONOMER"/>
<dbReference type="UniPathway" id="UPA00068">
    <property type="reaction ID" value="UER00113"/>
</dbReference>
<dbReference type="Proteomes" id="UP000001035">
    <property type="component" value="Chromosome 2"/>
</dbReference>
<dbReference type="GO" id="GO:0005737">
    <property type="term" value="C:cytoplasm"/>
    <property type="evidence" value="ECO:0007669"/>
    <property type="project" value="UniProtKB-SubCell"/>
</dbReference>
<dbReference type="GO" id="GO:0004055">
    <property type="term" value="F:argininosuccinate synthase activity"/>
    <property type="evidence" value="ECO:0007669"/>
    <property type="project" value="UniProtKB-UniRule"/>
</dbReference>
<dbReference type="GO" id="GO:0005524">
    <property type="term" value="F:ATP binding"/>
    <property type="evidence" value="ECO:0007669"/>
    <property type="project" value="UniProtKB-UniRule"/>
</dbReference>
<dbReference type="GO" id="GO:0042803">
    <property type="term" value="F:protein homodimerization activity"/>
    <property type="evidence" value="ECO:0007669"/>
    <property type="project" value="InterPro"/>
</dbReference>
<dbReference type="GO" id="GO:0000053">
    <property type="term" value="P:argininosuccinate metabolic process"/>
    <property type="evidence" value="ECO:0007669"/>
    <property type="project" value="TreeGrafter"/>
</dbReference>
<dbReference type="GO" id="GO:0006526">
    <property type="term" value="P:L-arginine biosynthetic process"/>
    <property type="evidence" value="ECO:0007669"/>
    <property type="project" value="UniProtKB-UniRule"/>
</dbReference>
<dbReference type="GO" id="GO:0000050">
    <property type="term" value="P:urea cycle"/>
    <property type="evidence" value="ECO:0007669"/>
    <property type="project" value="TreeGrafter"/>
</dbReference>
<dbReference type="CDD" id="cd01999">
    <property type="entry name" value="ASS"/>
    <property type="match status" value="1"/>
</dbReference>
<dbReference type="FunFam" id="1.10.287.400:FF:000001">
    <property type="entry name" value="Argininosuccinate synthase"/>
    <property type="match status" value="1"/>
</dbReference>
<dbReference type="Gene3D" id="1.10.287.400">
    <property type="match status" value="1"/>
</dbReference>
<dbReference type="Gene3D" id="3.90.1260.10">
    <property type="entry name" value="Argininosuccinate synthetase, chain A, domain 2"/>
    <property type="match status" value="1"/>
</dbReference>
<dbReference type="Gene3D" id="3.40.50.620">
    <property type="entry name" value="HUPs"/>
    <property type="match status" value="1"/>
</dbReference>
<dbReference type="HAMAP" id="MF_00581">
    <property type="entry name" value="Arg_succ_synth_type2"/>
    <property type="match status" value="1"/>
</dbReference>
<dbReference type="InterPro" id="IPR023437">
    <property type="entry name" value="Arg_succ_synth_type2_subfam"/>
</dbReference>
<dbReference type="InterPro" id="IPR048268">
    <property type="entry name" value="Arginosuc_syn_C"/>
</dbReference>
<dbReference type="InterPro" id="IPR048267">
    <property type="entry name" value="Arginosuc_syn_N"/>
</dbReference>
<dbReference type="InterPro" id="IPR001518">
    <property type="entry name" value="Arginosuc_synth"/>
</dbReference>
<dbReference type="InterPro" id="IPR018223">
    <property type="entry name" value="Arginosuc_synth_CS"/>
</dbReference>
<dbReference type="InterPro" id="IPR023434">
    <property type="entry name" value="Arginosuc_synth_type_1_subfam"/>
</dbReference>
<dbReference type="InterPro" id="IPR024074">
    <property type="entry name" value="AS_cat/multimer_dom_body"/>
</dbReference>
<dbReference type="InterPro" id="IPR024073">
    <property type="entry name" value="AS_multimer_C_tail"/>
</dbReference>
<dbReference type="InterPro" id="IPR014729">
    <property type="entry name" value="Rossmann-like_a/b/a_fold"/>
</dbReference>
<dbReference type="NCBIfam" id="TIGR00032">
    <property type="entry name" value="argG"/>
    <property type="match status" value="1"/>
</dbReference>
<dbReference type="NCBIfam" id="NF003779">
    <property type="entry name" value="PRK05370.1"/>
    <property type="match status" value="1"/>
</dbReference>
<dbReference type="PANTHER" id="PTHR11587">
    <property type="entry name" value="ARGININOSUCCINATE SYNTHASE"/>
    <property type="match status" value="1"/>
</dbReference>
<dbReference type="PANTHER" id="PTHR11587:SF2">
    <property type="entry name" value="ARGININOSUCCINATE SYNTHASE"/>
    <property type="match status" value="1"/>
</dbReference>
<dbReference type="Pfam" id="PF20979">
    <property type="entry name" value="Arginosuc_syn_C"/>
    <property type="match status" value="1"/>
</dbReference>
<dbReference type="Pfam" id="PF00764">
    <property type="entry name" value="Arginosuc_synth"/>
    <property type="match status" value="1"/>
</dbReference>
<dbReference type="SUPFAM" id="SSF52402">
    <property type="entry name" value="Adenine nucleotide alpha hydrolases-like"/>
    <property type="match status" value="1"/>
</dbReference>
<dbReference type="SUPFAM" id="SSF69864">
    <property type="entry name" value="Argininosuccinate synthetase, C-terminal domain"/>
    <property type="match status" value="1"/>
</dbReference>
<dbReference type="PROSITE" id="PS00564">
    <property type="entry name" value="ARGININOSUCCIN_SYN_1"/>
    <property type="match status" value="1"/>
</dbReference>
<dbReference type="PROSITE" id="PS00565">
    <property type="entry name" value="ARGININOSUCCIN_SYN_2"/>
    <property type="match status" value="1"/>
</dbReference>
<accession>B4EM48</accession>
<comment type="catalytic activity">
    <reaction evidence="1">
        <text>L-citrulline + L-aspartate + ATP = 2-(N(omega)-L-arginino)succinate + AMP + diphosphate + H(+)</text>
        <dbReference type="Rhea" id="RHEA:10932"/>
        <dbReference type="ChEBI" id="CHEBI:15378"/>
        <dbReference type="ChEBI" id="CHEBI:29991"/>
        <dbReference type="ChEBI" id="CHEBI:30616"/>
        <dbReference type="ChEBI" id="CHEBI:33019"/>
        <dbReference type="ChEBI" id="CHEBI:57472"/>
        <dbReference type="ChEBI" id="CHEBI:57743"/>
        <dbReference type="ChEBI" id="CHEBI:456215"/>
        <dbReference type="EC" id="6.3.4.5"/>
    </reaction>
</comment>
<comment type="pathway">
    <text evidence="1">Amino-acid biosynthesis; L-arginine biosynthesis; L-arginine from L-ornithine and carbamoyl phosphate: step 2/3.</text>
</comment>
<comment type="subunit">
    <text evidence="1">Homotetramer.</text>
</comment>
<comment type="subcellular location">
    <subcellularLocation>
        <location evidence="1">Cytoplasm</location>
    </subcellularLocation>
</comment>
<comment type="similarity">
    <text evidence="1">Belongs to the argininosuccinate synthase family. Type 2 subfamily.</text>
</comment>
<sequence length="445" mass="49193">MSTILESLPTGQKVGIAFSGGLDTSAALHWMKLKGAVPYAYTANLGQPDEDDYDAIPKRAIEYGAAGARLIDCRAQLVAEGIAALQSGAFHITTAGVTYFNTTPIGRAVTGTMLVAAMKEDGVNIWGDGSTYKGNDIERFYRYGLLVNPDLKIYKPWLDQTFIDELGGRAEMSEFMNQAGFAYKMSAEKAYSTDSNLLGATHEAKDLESLESGIKIVNPIMGVAFWRDDVKIAAEEVTVRFEAGQPVALNGVEFNDQVELLLEANRIGGRHGLGMSDQIENRIIEAKSRGIYEAPGLALLYIAYERLVTGIHNEDTIEQYRENGRRLGRLLYQGRWFDPQAIMLRETAQRWVARAITGEVKIELRRGNDYSILSTKSPNLTYQPERLSMEKVASTFSPRDRIGQLTMRNLDITDTRDKLRVYSQVGLLTPGEASALPQIKGDGDK</sequence>
<name>ASSY_BURCJ</name>
<keyword id="KW-0028">Amino-acid biosynthesis</keyword>
<keyword id="KW-0055">Arginine biosynthesis</keyword>
<keyword id="KW-0067">ATP-binding</keyword>
<keyword id="KW-0963">Cytoplasm</keyword>
<keyword id="KW-0436">Ligase</keyword>
<keyword id="KW-0547">Nucleotide-binding</keyword>
<reference key="1">
    <citation type="journal article" date="2009" name="J. Bacteriol.">
        <title>The genome of Burkholderia cenocepacia J2315, an epidemic pathogen of cystic fibrosis patients.</title>
        <authorList>
            <person name="Holden M.T."/>
            <person name="Seth-Smith H.M."/>
            <person name="Crossman L.C."/>
            <person name="Sebaihia M."/>
            <person name="Bentley S.D."/>
            <person name="Cerdeno-Tarraga A.M."/>
            <person name="Thomson N.R."/>
            <person name="Bason N."/>
            <person name="Quail M.A."/>
            <person name="Sharp S."/>
            <person name="Cherevach I."/>
            <person name="Churcher C."/>
            <person name="Goodhead I."/>
            <person name="Hauser H."/>
            <person name="Holroyd N."/>
            <person name="Mungall K."/>
            <person name="Scott P."/>
            <person name="Walker D."/>
            <person name="White B."/>
            <person name="Rose H."/>
            <person name="Iversen P."/>
            <person name="Mil-Homens D."/>
            <person name="Rocha E.P."/>
            <person name="Fialho A.M."/>
            <person name="Baldwin A."/>
            <person name="Dowson C."/>
            <person name="Barrell B.G."/>
            <person name="Govan J.R."/>
            <person name="Vandamme P."/>
            <person name="Hart C.A."/>
            <person name="Mahenthiralingam E."/>
            <person name="Parkhill J."/>
        </authorList>
    </citation>
    <scope>NUCLEOTIDE SEQUENCE [LARGE SCALE GENOMIC DNA]</scope>
    <source>
        <strain>ATCC BAA-245 / DSM 16553 / LMG 16656 / NCTC 13227 / J2315 / CF5610</strain>
    </source>
</reference>
<protein>
    <recommendedName>
        <fullName evidence="1">Argininosuccinate synthase</fullName>
        <ecNumber evidence="1">6.3.4.5</ecNumber>
    </recommendedName>
    <alternativeName>
        <fullName evidence="1">Citrulline--aspartate ligase</fullName>
    </alternativeName>
</protein>